<proteinExistence type="inferred from homology"/>
<reference key="1">
    <citation type="journal article" date="1995" name="DNA Res.">
        <title>Sequence analysis of the genome of the unicellular cyanobacterium Synechocystis sp. strain PCC6803. I. Sequence features in the 1 Mb region from map positions 64% to 92% of the genome.</title>
        <authorList>
            <person name="Kaneko T."/>
            <person name="Tanaka A."/>
            <person name="Sato S."/>
            <person name="Kotani H."/>
            <person name="Sazuka T."/>
            <person name="Miyajima N."/>
            <person name="Sugiura M."/>
            <person name="Tabata S."/>
        </authorList>
    </citation>
    <scope>NUCLEOTIDE SEQUENCE [LARGE SCALE GENOMIC DNA]</scope>
    <source>
        <strain>ATCC 27184 / PCC 6803 / N-1</strain>
    </source>
</reference>
<reference key="2">
    <citation type="journal article" date="1996" name="DNA Res.">
        <title>Sequence analysis of the genome of the unicellular cyanobacterium Synechocystis sp. strain PCC6803. II. Sequence determination of the entire genome and assignment of potential protein-coding regions.</title>
        <authorList>
            <person name="Kaneko T."/>
            <person name="Sato S."/>
            <person name="Kotani H."/>
            <person name="Tanaka A."/>
            <person name="Asamizu E."/>
            <person name="Nakamura Y."/>
            <person name="Miyajima N."/>
            <person name="Hirosawa M."/>
            <person name="Sugiura M."/>
            <person name="Sasamoto S."/>
            <person name="Kimura T."/>
            <person name="Hosouchi T."/>
            <person name="Matsuno A."/>
            <person name="Muraki A."/>
            <person name="Nakazaki N."/>
            <person name="Naruo K."/>
            <person name="Okumura S."/>
            <person name="Shimpo S."/>
            <person name="Takeuchi C."/>
            <person name="Wada T."/>
            <person name="Watanabe A."/>
            <person name="Yamada M."/>
            <person name="Yasuda M."/>
            <person name="Tabata S."/>
        </authorList>
    </citation>
    <scope>NUCLEOTIDE SEQUENCE [LARGE SCALE GENOMIC DNA]</scope>
    <source>
        <strain>ATCC 27184 / PCC 6803 / Kazusa</strain>
    </source>
</reference>
<sequence>MFSPSVYSEIIATLPPSVRLVAVTKTKAIADIEAAYGAGIRDFAESRIQEALPKIEALANYQDINWHFIGRLQSNKARKVVENFTYIHSVDNLAIAVKLDRIAEELNKFPQGLLQIKLLPDENKSGWTREELKLDLPQLELLKNLKICGLMTILPLGLSPGDRQLTFGELKNLATAINQQSSLSLTELSMGMSGDYPEAIAAGATMIRLGTILFGDRL</sequence>
<protein>
    <recommendedName>
        <fullName evidence="1">Pyridoxal phosphate homeostasis protein</fullName>
        <shortName evidence="1">PLP homeostasis protein</shortName>
    </recommendedName>
</protein>
<evidence type="ECO:0000255" key="1">
    <source>
        <dbReference type="HAMAP-Rule" id="MF_02087"/>
    </source>
</evidence>
<comment type="function">
    <text evidence="1">Pyridoxal 5'-phosphate (PLP)-binding protein, which is involved in PLP homeostasis.</text>
</comment>
<comment type="similarity">
    <text evidence="1">Belongs to the pyridoxal phosphate-binding protein YggS/PROSC family.</text>
</comment>
<feature type="chain" id="PRO_0000163207" description="Pyridoxal phosphate homeostasis protein">
    <location>
        <begin position="1"/>
        <end position="218"/>
    </location>
</feature>
<feature type="modified residue" description="N6-(pyridoxal phosphate)lysine" evidence="1">
    <location>
        <position position="25"/>
    </location>
</feature>
<dbReference type="EMBL" id="BA000022">
    <property type="protein sequence ID" value="BAA10877.1"/>
    <property type="molecule type" value="Genomic_DNA"/>
</dbReference>
<dbReference type="PIR" id="S76030">
    <property type="entry name" value="S76030"/>
</dbReference>
<dbReference type="SMR" id="P52056"/>
<dbReference type="FunCoup" id="P52056">
    <property type="interactions" value="355"/>
</dbReference>
<dbReference type="IntAct" id="P52056">
    <property type="interactions" value="1"/>
</dbReference>
<dbReference type="STRING" id="1148.gene:10500383"/>
<dbReference type="PaxDb" id="1148-1001387"/>
<dbReference type="EnsemblBacteria" id="BAA10877">
    <property type="protein sequence ID" value="BAA10877"/>
    <property type="gene ID" value="BAA10877"/>
</dbReference>
<dbReference type="KEGG" id="syn:slr0556"/>
<dbReference type="eggNOG" id="COG0325">
    <property type="taxonomic scope" value="Bacteria"/>
</dbReference>
<dbReference type="InParanoid" id="P52056"/>
<dbReference type="PhylomeDB" id="P52056"/>
<dbReference type="Proteomes" id="UP000001425">
    <property type="component" value="Chromosome"/>
</dbReference>
<dbReference type="GO" id="GO:0005737">
    <property type="term" value="C:cytoplasm"/>
    <property type="evidence" value="ECO:0000318"/>
    <property type="project" value="GO_Central"/>
</dbReference>
<dbReference type="GO" id="GO:0030170">
    <property type="term" value="F:pyridoxal phosphate binding"/>
    <property type="evidence" value="ECO:0000318"/>
    <property type="project" value="GO_Central"/>
</dbReference>
<dbReference type="CDD" id="cd00635">
    <property type="entry name" value="PLPDE_III_YBL036c_like"/>
    <property type="match status" value="1"/>
</dbReference>
<dbReference type="FunFam" id="3.20.20.10:FF:000024">
    <property type="entry name" value="Pyridoxal phosphate homeostasis protein"/>
    <property type="match status" value="1"/>
</dbReference>
<dbReference type="Gene3D" id="3.20.20.10">
    <property type="entry name" value="Alanine racemase"/>
    <property type="match status" value="1"/>
</dbReference>
<dbReference type="HAMAP" id="MF_02087">
    <property type="entry name" value="PLP_homeostasis"/>
    <property type="match status" value="1"/>
</dbReference>
<dbReference type="InterPro" id="IPR001608">
    <property type="entry name" value="Ala_racemase_N"/>
</dbReference>
<dbReference type="InterPro" id="IPR029066">
    <property type="entry name" value="PLP-binding_barrel"/>
</dbReference>
<dbReference type="InterPro" id="IPR011078">
    <property type="entry name" value="PyrdxlP_homeostasis"/>
</dbReference>
<dbReference type="NCBIfam" id="TIGR00044">
    <property type="entry name" value="YggS family pyridoxal phosphate-dependent enzyme"/>
    <property type="match status" value="1"/>
</dbReference>
<dbReference type="PANTHER" id="PTHR10146">
    <property type="entry name" value="PROLINE SYNTHETASE CO-TRANSCRIBED BACTERIAL HOMOLOG PROTEIN"/>
    <property type="match status" value="1"/>
</dbReference>
<dbReference type="PANTHER" id="PTHR10146:SF14">
    <property type="entry name" value="PYRIDOXAL PHOSPHATE HOMEOSTASIS PROTEIN"/>
    <property type="match status" value="1"/>
</dbReference>
<dbReference type="Pfam" id="PF01168">
    <property type="entry name" value="Ala_racemase_N"/>
    <property type="match status" value="1"/>
</dbReference>
<dbReference type="PIRSF" id="PIRSF004848">
    <property type="entry name" value="YBL036c_PLPDEIII"/>
    <property type="match status" value="1"/>
</dbReference>
<dbReference type="SUPFAM" id="SSF51419">
    <property type="entry name" value="PLP-binding barrel"/>
    <property type="match status" value="1"/>
</dbReference>
<dbReference type="PROSITE" id="PS01211">
    <property type="entry name" value="UPF0001"/>
    <property type="match status" value="1"/>
</dbReference>
<accession>P52056</accession>
<keyword id="KW-0663">Pyridoxal phosphate</keyword>
<keyword id="KW-1185">Reference proteome</keyword>
<organism>
    <name type="scientific">Synechocystis sp. (strain ATCC 27184 / PCC 6803 / Kazusa)</name>
    <dbReference type="NCBI Taxonomy" id="1111708"/>
    <lineage>
        <taxon>Bacteria</taxon>
        <taxon>Bacillati</taxon>
        <taxon>Cyanobacteriota</taxon>
        <taxon>Cyanophyceae</taxon>
        <taxon>Synechococcales</taxon>
        <taxon>Merismopediaceae</taxon>
        <taxon>Synechocystis</taxon>
    </lineage>
</organism>
<gene>
    <name type="ordered locus">slr0556</name>
</gene>
<name>PLPHP_SYNY3</name>